<comment type="function">
    <text evidence="1">The beta subunit is responsible for the synthesis of L-tryptophan from indole and L-serine.</text>
</comment>
<comment type="catalytic activity">
    <reaction evidence="1">
        <text>(1S,2R)-1-C-(indol-3-yl)glycerol 3-phosphate + L-serine = D-glyceraldehyde 3-phosphate + L-tryptophan + H2O</text>
        <dbReference type="Rhea" id="RHEA:10532"/>
        <dbReference type="ChEBI" id="CHEBI:15377"/>
        <dbReference type="ChEBI" id="CHEBI:33384"/>
        <dbReference type="ChEBI" id="CHEBI:57912"/>
        <dbReference type="ChEBI" id="CHEBI:58866"/>
        <dbReference type="ChEBI" id="CHEBI:59776"/>
        <dbReference type="EC" id="4.2.1.20"/>
    </reaction>
</comment>
<comment type="cofactor">
    <cofactor evidence="1">
        <name>pyridoxal 5'-phosphate</name>
        <dbReference type="ChEBI" id="CHEBI:597326"/>
    </cofactor>
</comment>
<comment type="pathway">
    <text evidence="1">Amino-acid biosynthesis; L-tryptophan biosynthesis; L-tryptophan from chorismate: step 5/5.</text>
</comment>
<comment type="subunit">
    <text evidence="1">Tetramer of two alpha and two beta chains.</text>
</comment>
<comment type="similarity">
    <text evidence="1">Belongs to the TrpB family.</text>
</comment>
<proteinExistence type="inferred from homology"/>
<gene>
    <name evidence="1" type="primary">trpB</name>
    <name type="ordered locus">BPUM_1995</name>
</gene>
<reference key="1">
    <citation type="journal article" date="2007" name="PLoS ONE">
        <title>Paradoxical DNA repair and peroxide resistance gene conservation in Bacillus pumilus SAFR-032.</title>
        <authorList>
            <person name="Gioia J."/>
            <person name="Yerrapragada S."/>
            <person name="Qin X."/>
            <person name="Jiang H."/>
            <person name="Igboeli O.C."/>
            <person name="Muzny D."/>
            <person name="Dugan-Rocha S."/>
            <person name="Ding Y."/>
            <person name="Hawes A."/>
            <person name="Liu W."/>
            <person name="Perez L."/>
            <person name="Kovar C."/>
            <person name="Dinh H."/>
            <person name="Lee S."/>
            <person name="Nazareth L."/>
            <person name="Blyth P."/>
            <person name="Holder M."/>
            <person name="Buhay C."/>
            <person name="Tirumalai M.R."/>
            <person name="Liu Y."/>
            <person name="Dasgupta I."/>
            <person name="Bokhetache L."/>
            <person name="Fujita M."/>
            <person name="Karouia F."/>
            <person name="Eswara Moorthy P."/>
            <person name="Siefert J."/>
            <person name="Uzman A."/>
            <person name="Buzumbo P."/>
            <person name="Verma A."/>
            <person name="Zwiya H."/>
            <person name="McWilliams B.D."/>
            <person name="Olowu A."/>
            <person name="Clinkenbeard K.D."/>
            <person name="Newcombe D."/>
            <person name="Golebiewski L."/>
            <person name="Petrosino J.F."/>
            <person name="Nicholson W.L."/>
            <person name="Fox G.E."/>
            <person name="Venkateswaran K."/>
            <person name="Highlander S.K."/>
            <person name="Weinstock G.M."/>
        </authorList>
    </citation>
    <scope>NUCLEOTIDE SEQUENCE [LARGE SCALE GENOMIC DNA]</scope>
    <source>
        <strain>SAFR-032</strain>
    </source>
</reference>
<keyword id="KW-0028">Amino-acid biosynthesis</keyword>
<keyword id="KW-0057">Aromatic amino acid biosynthesis</keyword>
<keyword id="KW-0456">Lyase</keyword>
<keyword id="KW-0663">Pyridoxal phosphate</keyword>
<keyword id="KW-0822">Tryptophan biosynthesis</keyword>
<evidence type="ECO:0000255" key="1">
    <source>
        <dbReference type="HAMAP-Rule" id="MF_00133"/>
    </source>
</evidence>
<name>TRPB_BACP2</name>
<dbReference type="EC" id="4.2.1.20" evidence="1"/>
<dbReference type="EMBL" id="CP000813">
    <property type="protein sequence ID" value="ABV62665.1"/>
    <property type="molecule type" value="Genomic_DNA"/>
</dbReference>
<dbReference type="RefSeq" id="WP_012010376.1">
    <property type="nucleotide sequence ID" value="NC_009848.4"/>
</dbReference>
<dbReference type="SMR" id="A8FEJ8"/>
<dbReference type="STRING" id="315750.BPUM_1995"/>
<dbReference type="GeneID" id="5621261"/>
<dbReference type="KEGG" id="bpu:BPUM_1995"/>
<dbReference type="eggNOG" id="COG0133">
    <property type="taxonomic scope" value="Bacteria"/>
</dbReference>
<dbReference type="HOGENOM" id="CLU_016734_3_1_9"/>
<dbReference type="OrthoDB" id="9766131at2"/>
<dbReference type="UniPathway" id="UPA00035">
    <property type="reaction ID" value="UER00044"/>
</dbReference>
<dbReference type="Proteomes" id="UP000001355">
    <property type="component" value="Chromosome"/>
</dbReference>
<dbReference type="GO" id="GO:0005737">
    <property type="term" value="C:cytoplasm"/>
    <property type="evidence" value="ECO:0007669"/>
    <property type="project" value="TreeGrafter"/>
</dbReference>
<dbReference type="GO" id="GO:0004834">
    <property type="term" value="F:tryptophan synthase activity"/>
    <property type="evidence" value="ECO:0007669"/>
    <property type="project" value="UniProtKB-UniRule"/>
</dbReference>
<dbReference type="CDD" id="cd06446">
    <property type="entry name" value="Trp-synth_B"/>
    <property type="match status" value="1"/>
</dbReference>
<dbReference type="FunFam" id="3.40.50.1100:FF:000001">
    <property type="entry name" value="Tryptophan synthase beta chain"/>
    <property type="match status" value="1"/>
</dbReference>
<dbReference type="FunFam" id="3.40.50.1100:FF:000004">
    <property type="entry name" value="Tryptophan synthase beta chain"/>
    <property type="match status" value="1"/>
</dbReference>
<dbReference type="Gene3D" id="3.40.50.1100">
    <property type="match status" value="2"/>
</dbReference>
<dbReference type="HAMAP" id="MF_00133">
    <property type="entry name" value="Trp_synth_beta"/>
    <property type="match status" value="1"/>
</dbReference>
<dbReference type="InterPro" id="IPR006653">
    <property type="entry name" value="Trp_synth_b_CS"/>
</dbReference>
<dbReference type="InterPro" id="IPR006654">
    <property type="entry name" value="Trp_synth_beta"/>
</dbReference>
<dbReference type="InterPro" id="IPR023026">
    <property type="entry name" value="Trp_synth_beta/beta-like"/>
</dbReference>
<dbReference type="InterPro" id="IPR001926">
    <property type="entry name" value="TrpB-like_PALP"/>
</dbReference>
<dbReference type="InterPro" id="IPR036052">
    <property type="entry name" value="TrpB-like_PALP_sf"/>
</dbReference>
<dbReference type="NCBIfam" id="TIGR00263">
    <property type="entry name" value="trpB"/>
    <property type="match status" value="1"/>
</dbReference>
<dbReference type="PANTHER" id="PTHR48077:SF3">
    <property type="entry name" value="TRYPTOPHAN SYNTHASE"/>
    <property type="match status" value="1"/>
</dbReference>
<dbReference type="PANTHER" id="PTHR48077">
    <property type="entry name" value="TRYPTOPHAN SYNTHASE-RELATED"/>
    <property type="match status" value="1"/>
</dbReference>
<dbReference type="Pfam" id="PF00291">
    <property type="entry name" value="PALP"/>
    <property type="match status" value="1"/>
</dbReference>
<dbReference type="PIRSF" id="PIRSF001413">
    <property type="entry name" value="Trp_syn_beta"/>
    <property type="match status" value="1"/>
</dbReference>
<dbReference type="SUPFAM" id="SSF53686">
    <property type="entry name" value="Tryptophan synthase beta subunit-like PLP-dependent enzymes"/>
    <property type="match status" value="1"/>
</dbReference>
<dbReference type="PROSITE" id="PS00168">
    <property type="entry name" value="TRP_SYNTHASE_BETA"/>
    <property type="match status" value="1"/>
</dbReference>
<protein>
    <recommendedName>
        <fullName evidence="1">Tryptophan synthase beta chain</fullName>
        <ecNumber evidence="1">4.2.1.20</ecNumber>
    </recommendedName>
</protein>
<sequence>MYAYPNELGRYGEFGGKFVPETLMQPLKEIEQAFNELKEDPAFEQEYLSLLHNYSGRPTALTYADQLSAYLGGAKIYLKREDLNHTGAHKINNALGQALLAKKMGKSNIIAETGAGQHGVAAATVAAKFGLSCTVFMGKEDVERQSLNVFRMKLLGAEVIPVTSGNGTLKDATNEAIRYWVQHCSDHFYMIGSVVGPHPYPQIVSEFQRMIGDEAKEQMLKKEGRLPHKVIACVGGGSNAIGMYRAFLDDEVDLIGVEAAGKGIDTPLHAATITKGTKGVIHGSLTYLIQDEFGQIIEPYSISAGLDYPGIGPEHAYLHASGRVQYVSATDQEALDALKLLTEKEGILPAIESAHALAKAFEMSRTMSEDEIILVCLSGRGDKDVHTLMNVLESEGKTK</sequence>
<accession>A8FEJ8</accession>
<feature type="chain" id="PRO_1000057859" description="Tryptophan synthase beta chain">
    <location>
        <begin position="1"/>
        <end position="399"/>
    </location>
</feature>
<feature type="modified residue" description="N6-(pyridoxal phosphate)lysine" evidence="1">
    <location>
        <position position="90"/>
    </location>
</feature>
<organism>
    <name type="scientific">Bacillus pumilus (strain SAFR-032)</name>
    <dbReference type="NCBI Taxonomy" id="315750"/>
    <lineage>
        <taxon>Bacteria</taxon>
        <taxon>Bacillati</taxon>
        <taxon>Bacillota</taxon>
        <taxon>Bacilli</taxon>
        <taxon>Bacillales</taxon>
        <taxon>Bacillaceae</taxon>
        <taxon>Bacillus</taxon>
    </lineage>
</organism>